<gene>
    <name evidence="1" type="primary">gcvH</name>
    <name type="ordered locus">SPC_3114</name>
</gene>
<protein>
    <recommendedName>
        <fullName evidence="1">Glycine cleavage system H protein</fullName>
    </recommendedName>
</protein>
<evidence type="ECO:0000255" key="1">
    <source>
        <dbReference type="HAMAP-Rule" id="MF_00272"/>
    </source>
</evidence>
<evidence type="ECO:0000255" key="2">
    <source>
        <dbReference type="PROSITE-ProRule" id="PRU01066"/>
    </source>
</evidence>
<proteinExistence type="inferred from homology"/>
<keyword id="KW-0450">Lipoyl</keyword>
<comment type="function">
    <text evidence="1">The glycine cleavage system catalyzes the degradation of glycine. The H protein shuttles the methylamine group of glycine from the P protein to the T protein.</text>
</comment>
<comment type="cofactor">
    <cofactor evidence="1">
        <name>(R)-lipoate</name>
        <dbReference type="ChEBI" id="CHEBI:83088"/>
    </cofactor>
    <text evidence="1">Binds 1 lipoyl cofactor covalently.</text>
</comment>
<comment type="subunit">
    <text evidence="1">The glycine cleavage system is composed of four proteins: P, T, L and H.</text>
</comment>
<comment type="similarity">
    <text evidence="1">Belongs to the GcvH family.</text>
</comment>
<accession>C0PY27</accession>
<reference key="1">
    <citation type="journal article" date="2009" name="PLoS ONE">
        <title>Salmonella paratyphi C: genetic divergence from Salmonella choleraesuis and pathogenic convergence with Salmonella typhi.</title>
        <authorList>
            <person name="Liu W.-Q."/>
            <person name="Feng Y."/>
            <person name="Wang Y."/>
            <person name="Zou Q.-H."/>
            <person name="Chen F."/>
            <person name="Guo J.-T."/>
            <person name="Peng Y.-H."/>
            <person name="Jin Y."/>
            <person name="Li Y.-G."/>
            <person name="Hu S.-N."/>
            <person name="Johnston R.N."/>
            <person name="Liu G.-R."/>
            <person name="Liu S.-L."/>
        </authorList>
    </citation>
    <scope>NUCLEOTIDE SEQUENCE [LARGE SCALE GENOMIC DNA]</scope>
    <source>
        <strain>RKS4594</strain>
    </source>
</reference>
<organism>
    <name type="scientific">Salmonella paratyphi C (strain RKS4594)</name>
    <dbReference type="NCBI Taxonomy" id="476213"/>
    <lineage>
        <taxon>Bacteria</taxon>
        <taxon>Pseudomonadati</taxon>
        <taxon>Pseudomonadota</taxon>
        <taxon>Gammaproteobacteria</taxon>
        <taxon>Enterobacterales</taxon>
        <taxon>Enterobacteriaceae</taxon>
        <taxon>Salmonella</taxon>
    </lineage>
</organism>
<name>GCSH_SALPC</name>
<dbReference type="EMBL" id="CP000857">
    <property type="protein sequence ID" value="ACN47201.1"/>
    <property type="molecule type" value="Genomic_DNA"/>
</dbReference>
<dbReference type="RefSeq" id="WP_000073211.1">
    <property type="nucleotide sequence ID" value="NC_012125.1"/>
</dbReference>
<dbReference type="SMR" id="C0PY27"/>
<dbReference type="KEGG" id="sei:SPC_3114"/>
<dbReference type="HOGENOM" id="CLU_097408_2_1_6"/>
<dbReference type="Proteomes" id="UP000001599">
    <property type="component" value="Chromosome"/>
</dbReference>
<dbReference type="GO" id="GO:0005829">
    <property type="term" value="C:cytosol"/>
    <property type="evidence" value="ECO:0007669"/>
    <property type="project" value="TreeGrafter"/>
</dbReference>
<dbReference type="GO" id="GO:0005960">
    <property type="term" value="C:glycine cleavage complex"/>
    <property type="evidence" value="ECO:0007669"/>
    <property type="project" value="InterPro"/>
</dbReference>
<dbReference type="GO" id="GO:0019464">
    <property type="term" value="P:glycine decarboxylation via glycine cleavage system"/>
    <property type="evidence" value="ECO:0007669"/>
    <property type="project" value="UniProtKB-UniRule"/>
</dbReference>
<dbReference type="CDD" id="cd06848">
    <property type="entry name" value="GCS_H"/>
    <property type="match status" value="1"/>
</dbReference>
<dbReference type="FunFam" id="2.40.50.100:FF:000011">
    <property type="entry name" value="Glycine cleavage system H protein"/>
    <property type="match status" value="1"/>
</dbReference>
<dbReference type="Gene3D" id="2.40.50.100">
    <property type="match status" value="1"/>
</dbReference>
<dbReference type="HAMAP" id="MF_00272">
    <property type="entry name" value="GcvH"/>
    <property type="match status" value="1"/>
</dbReference>
<dbReference type="InterPro" id="IPR003016">
    <property type="entry name" value="2-oxoA_DH_lipoyl-BS"/>
</dbReference>
<dbReference type="InterPro" id="IPR000089">
    <property type="entry name" value="Biotin_lipoyl"/>
</dbReference>
<dbReference type="InterPro" id="IPR002930">
    <property type="entry name" value="GCV_H"/>
</dbReference>
<dbReference type="InterPro" id="IPR033753">
    <property type="entry name" value="GCV_H/Fam206"/>
</dbReference>
<dbReference type="InterPro" id="IPR017453">
    <property type="entry name" value="GCV_H_sub"/>
</dbReference>
<dbReference type="InterPro" id="IPR011053">
    <property type="entry name" value="Single_hybrid_motif"/>
</dbReference>
<dbReference type="NCBIfam" id="TIGR00527">
    <property type="entry name" value="gcvH"/>
    <property type="match status" value="1"/>
</dbReference>
<dbReference type="NCBIfam" id="NF002270">
    <property type="entry name" value="PRK01202.1"/>
    <property type="match status" value="1"/>
</dbReference>
<dbReference type="PANTHER" id="PTHR11715">
    <property type="entry name" value="GLYCINE CLEAVAGE SYSTEM H PROTEIN"/>
    <property type="match status" value="1"/>
</dbReference>
<dbReference type="PANTHER" id="PTHR11715:SF3">
    <property type="entry name" value="GLYCINE CLEAVAGE SYSTEM H PROTEIN-RELATED"/>
    <property type="match status" value="1"/>
</dbReference>
<dbReference type="Pfam" id="PF01597">
    <property type="entry name" value="GCV_H"/>
    <property type="match status" value="1"/>
</dbReference>
<dbReference type="SUPFAM" id="SSF51230">
    <property type="entry name" value="Single hybrid motif"/>
    <property type="match status" value="1"/>
</dbReference>
<dbReference type="PROSITE" id="PS50968">
    <property type="entry name" value="BIOTINYL_LIPOYL"/>
    <property type="match status" value="1"/>
</dbReference>
<dbReference type="PROSITE" id="PS00189">
    <property type="entry name" value="LIPOYL"/>
    <property type="match status" value="1"/>
</dbReference>
<sequence length="129" mass="13841">MSNVPAELKYSKEHEWLRKEADGTYTVGITEHAQELLGDMVFVDLPEVGATVSAGDDCAVAESVKAASDIYAPVSGEIVAVNDALSDSPELVNSEPYTGGWIFKIKASDESELESLLDATAYEALLEDE</sequence>
<feature type="chain" id="PRO_1000132430" description="Glycine cleavage system H protein">
    <location>
        <begin position="1"/>
        <end position="129"/>
    </location>
</feature>
<feature type="domain" description="Lipoyl-binding" evidence="2">
    <location>
        <begin position="24"/>
        <end position="106"/>
    </location>
</feature>
<feature type="modified residue" description="N6-lipoyllysine" evidence="1">
    <location>
        <position position="65"/>
    </location>
</feature>